<evidence type="ECO:0000250" key="1"/>
<evidence type="ECO:0000255" key="2"/>
<evidence type="ECO:0000269" key="3">
    <source>
    </source>
</evidence>
<evidence type="ECO:0000305" key="4"/>
<dbReference type="EMBL" id="AF202638">
    <property type="protein sequence ID" value="AAF71219.1"/>
    <property type="molecule type" value="Genomic_DNA"/>
</dbReference>
<dbReference type="EMBL" id="AE004439">
    <property type="protein sequence ID" value="AAK03742.1"/>
    <property type="molecule type" value="Genomic_DNA"/>
</dbReference>
<dbReference type="RefSeq" id="WP_005755258.1">
    <property type="nucleotide sequence ID" value="NC_002663.1"/>
</dbReference>
<dbReference type="SMR" id="Q9L8J3"/>
<dbReference type="STRING" id="272843.PM1658"/>
<dbReference type="EnsemblBacteria" id="AAK03742">
    <property type="protein sequence ID" value="AAK03742"/>
    <property type="gene ID" value="PM1658"/>
</dbReference>
<dbReference type="KEGG" id="pmu:PM1658"/>
<dbReference type="HOGENOM" id="CLU_1264879_0_0_6"/>
<dbReference type="OrthoDB" id="5685444at2"/>
<dbReference type="Proteomes" id="UP000000809">
    <property type="component" value="Chromosome"/>
</dbReference>
<dbReference type="GO" id="GO:0005886">
    <property type="term" value="C:plasma membrane"/>
    <property type="evidence" value="ECO:0007669"/>
    <property type="project" value="UniProtKB-SubCell"/>
</dbReference>
<dbReference type="InterPro" id="IPR019305">
    <property type="entry name" value="Uncharacterised_Smp"/>
</dbReference>
<dbReference type="Pfam" id="PF10144">
    <property type="entry name" value="SMP_2"/>
    <property type="match status" value="1"/>
</dbReference>
<protein>
    <recommendedName>
        <fullName>Protein AhpA</fullName>
    </recommendedName>
</protein>
<name>AHPA_PASMU</name>
<proteinExistence type="inferred from homology"/>
<reference key="1">
    <citation type="journal article" date="2000" name="Vet. Microbiol.">
        <title>Cloning and characterisation of the Pasteurella multocida ahpA gene responsible for a haemolytic phenotype in Escherichia coli.</title>
        <authorList>
            <person name="Cox A.J."/>
            <person name="Hunt M.L."/>
            <person name="Ruffolo C.G."/>
            <person name="Adler B."/>
        </authorList>
    </citation>
    <scope>NUCLEOTIDE SEQUENCE [GENOMIC DNA]</scope>
    <scope>FUNCTION</scope>
    <source>
        <strain>VP161</strain>
    </source>
</reference>
<reference key="2">
    <citation type="journal article" date="2001" name="Proc. Natl. Acad. Sci. U.S.A.">
        <title>Complete genomic sequence of Pasteurella multocida Pm70.</title>
        <authorList>
            <person name="May B.J."/>
            <person name="Zhang Q."/>
            <person name="Li L.L."/>
            <person name="Paustian M.L."/>
            <person name="Whittam T.S."/>
            <person name="Kapur V."/>
        </authorList>
    </citation>
    <scope>NUCLEOTIDE SEQUENCE [LARGE SCALE GENOMIC DNA]</scope>
    <source>
        <strain>Pm70</strain>
    </source>
</reference>
<feature type="chain" id="PRO_0000032807" description="Protein AhpA">
    <location>
        <begin position="1"/>
        <end position="226"/>
    </location>
</feature>
<feature type="transmembrane region" description="Helical; Name=1" evidence="2">
    <location>
        <begin position="12"/>
        <end position="32"/>
    </location>
</feature>
<feature type="transmembrane region" description="Helical; Name=2" evidence="2">
    <location>
        <begin position="169"/>
        <end position="189"/>
    </location>
</feature>
<accession>Q9L8J3</accession>
<gene>
    <name type="primary">ahpA</name>
    <name type="ordered locus">PM1658</name>
</gene>
<keyword id="KW-0997">Cell inner membrane</keyword>
<keyword id="KW-1003">Cell membrane</keyword>
<keyword id="KW-0472">Membrane</keyword>
<keyword id="KW-1185">Reference proteome</keyword>
<keyword id="KW-0812">Transmembrane</keyword>
<keyword id="KW-1133">Transmembrane helix</keyword>
<organism>
    <name type="scientific">Pasteurella multocida (strain Pm70)</name>
    <dbReference type="NCBI Taxonomy" id="272843"/>
    <lineage>
        <taxon>Bacteria</taxon>
        <taxon>Pseudomonadati</taxon>
        <taxon>Pseudomonadota</taxon>
        <taxon>Gammaproteobacteria</taxon>
        <taxon>Pasteurellales</taxon>
        <taxon>Pasteurellaceae</taxon>
        <taxon>Pasteurella</taxon>
    </lineage>
</organism>
<comment type="function">
    <text evidence="3">When anaerobically expressed in wild-type E.coli K12 confers a hemolytic phenotype, but not in an sheA mutant. Suggests it affects the expression of the latent E.coli K12 hemolysin sheA under anaerobic conditions.</text>
</comment>
<comment type="subcellular location">
    <subcellularLocation>
        <location evidence="1">Cell inner membrane</location>
        <topology evidence="1">Multi-pass membrane protein</topology>
    </subcellularLocation>
</comment>
<comment type="similarity">
    <text evidence="4">Belongs to the Smp family.</text>
</comment>
<sequence>MHLTKEKFIKLSMISSIIILCIAIVSVILFGVQQFKIGSQLASVNQVSNLSHLLIRQQANLLSMLLVNNASTEQLTESLDAFAKEEFVLDASIYSNRGELLAHTSHFQNLRLTLGLNSPTQPDEENTQQIVEPIYSLNGIEGFLRVTFDSKYGKTTQSKIDHLFHQLYGELIIIFLAGVLLASSIHYFLSHYRRTYRKVTENKAVKVLKTKQNVGNYHRRRRRLNK</sequence>